<dbReference type="EC" id="6.1.1.15" evidence="1"/>
<dbReference type="EMBL" id="CP000270">
    <property type="protein sequence ID" value="ABE32420.1"/>
    <property type="molecule type" value="Genomic_DNA"/>
</dbReference>
<dbReference type="RefSeq" id="WP_011489894.1">
    <property type="nucleotide sequence ID" value="NC_007951.1"/>
</dbReference>
<dbReference type="SMR" id="Q13U19"/>
<dbReference type="STRING" id="266265.Bxe_A0513"/>
<dbReference type="KEGG" id="bxb:DR64_2690"/>
<dbReference type="KEGG" id="bxe:Bxe_A0513"/>
<dbReference type="PATRIC" id="fig|266265.5.peg.4102"/>
<dbReference type="eggNOG" id="COG0442">
    <property type="taxonomic scope" value="Bacteria"/>
</dbReference>
<dbReference type="OrthoDB" id="9809052at2"/>
<dbReference type="Proteomes" id="UP000001817">
    <property type="component" value="Chromosome 1"/>
</dbReference>
<dbReference type="GO" id="GO:0005829">
    <property type="term" value="C:cytosol"/>
    <property type="evidence" value="ECO:0007669"/>
    <property type="project" value="TreeGrafter"/>
</dbReference>
<dbReference type="GO" id="GO:0002161">
    <property type="term" value="F:aminoacyl-tRNA deacylase activity"/>
    <property type="evidence" value="ECO:0007669"/>
    <property type="project" value="InterPro"/>
</dbReference>
<dbReference type="GO" id="GO:0005524">
    <property type="term" value="F:ATP binding"/>
    <property type="evidence" value="ECO:0007669"/>
    <property type="project" value="UniProtKB-UniRule"/>
</dbReference>
<dbReference type="GO" id="GO:0004827">
    <property type="term" value="F:proline-tRNA ligase activity"/>
    <property type="evidence" value="ECO:0007669"/>
    <property type="project" value="UniProtKB-UniRule"/>
</dbReference>
<dbReference type="GO" id="GO:0006433">
    <property type="term" value="P:prolyl-tRNA aminoacylation"/>
    <property type="evidence" value="ECO:0007669"/>
    <property type="project" value="UniProtKB-UniRule"/>
</dbReference>
<dbReference type="CDD" id="cd04334">
    <property type="entry name" value="ProRS-INS"/>
    <property type="match status" value="1"/>
</dbReference>
<dbReference type="CDD" id="cd00861">
    <property type="entry name" value="ProRS_anticodon_short"/>
    <property type="match status" value="1"/>
</dbReference>
<dbReference type="CDD" id="cd00779">
    <property type="entry name" value="ProRS_core_prok"/>
    <property type="match status" value="1"/>
</dbReference>
<dbReference type="FunFam" id="3.30.930.10:FF:000012">
    <property type="entry name" value="Proline--tRNA ligase"/>
    <property type="match status" value="1"/>
</dbReference>
<dbReference type="FunFam" id="3.30.930.10:FF:000097">
    <property type="entry name" value="Proline--tRNA ligase"/>
    <property type="match status" value="1"/>
</dbReference>
<dbReference type="Gene3D" id="3.40.50.800">
    <property type="entry name" value="Anticodon-binding domain"/>
    <property type="match status" value="1"/>
</dbReference>
<dbReference type="Gene3D" id="3.30.930.10">
    <property type="entry name" value="Bira Bifunctional Protein, Domain 2"/>
    <property type="match status" value="2"/>
</dbReference>
<dbReference type="Gene3D" id="3.90.960.10">
    <property type="entry name" value="YbaK/aminoacyl-tRNA synthetase-associated domain"/>
    <property type="match status" value="1"/>
</dbReference>
<dbReference type="HAMAP" id="MF_01569">
    <property type="entry name" value="Pro_tRNA_synth_type1"/>
    <property type="match status" value="1"/>
</dbReference>
<dbReference type="InterPro" id="IPR002314">
    <property type="entry name" value="aa-tRNA-synt_IIb"/>
</dbReference>
<dbReference type="InterPro" id="IPR006195">
    <property type="entry name" value="aa-tRNA-synth_II"/>
</dbReference>
<dbReference type="InterPro" id="IPR045864">
    <property type="entry name" value="aa-tRNA-synth_II/BPL/LPL"/>
</dbReference>
<dbReference type="InterPro" id="IPR004154">
    <property type="entry name" value="Anticodon-bd"/>
</dbReference>
<dbReference type="InterPro" id="IPR036621">
    <property type="entry name" value="Anticodon-bd_dom_sf"/>
</dbReference>
<dbReference type="InterPro" id="IPR002316">
    <property type="entry name" value="Pro-tRNA-ligase_IIa"/>
</dbReference>
<dbReference type="InterPro" id="IPR004500">
    <property type="entry name" value="Pro-tRNA-synth_IIa_bac-type"/>
</dbReference>
<dbReference type="InterPro" id="IPR023717">
    <property type="entry name" value="Pro-tRNA-Synthase_IIa_type1"/>
</dbReference>
<dbReference type="InterPro" id="IPR050062">
    <property type="entry name" value="Pro-tRNA_synthetase"/>
</dbReference>
<dbReference type="InterPro" id="IPR044140">
    <property type="entry name" value="ProRS_anticodon_short"/>
</dbReference>
<dbReference type="InterPro" id="IPR033730">
    <property type="entry name" value="ProRS_core_prok"/>
</dbReference>
<dbReference type="InterPro" id="IPR036754">
    <property type="entry name" value="YbaK/aa-tRNA-synt-asso_dom_sf"/>
</dbReference>
<dbReference type="InterPro" id="IPR007214">
    <property type="entry name" value="YbaK/aa-tRNA-synth-assoc-dom"/>
</dbReference>
<dbReference type="NCBIfam" id="NF006625">
    <property type="entry name" value="PRK09194.1"/>
    <property type="match status" value="1"/>
</dbReference>
<dbReference type="NCBIfam" id="TIGR00409">
    <property type="entry name" value="proS_fam_II"/>
    <property type="match status" value="1"/>
</dbReference>
<dbReference type="PANTHER" id="PTHR42753">
    <property type="entry name" value="MITOCHONDRIAL RIBOSOME PROTEIN L39/PROLYL-TRNA LIGASE FAMILY MEMBER"/>
    <property type="match status" value="1"/>
</dbReference>
<dbReference type="PANTHER" id="PTHR42753:SF2">
    <property type="entry name" value="PROLINE--TRNA LIGASE"/>
    <property type="match status" value="1"/>
</dbReference>
<dbReference type="Pfam" id="PF03129">
    <property type="entry name" value="HGTP_anticodon"/>
    <property type="match status" value="1"/>
</dbReference>
<dbReference type="Pfam" id="PF00587">
    <property type="entry name" value="tRNA-synt_2b"/>
    <property type="match status" value="1"/>
</dbReference>
<dbReference type="Pfam" id="PF04073">
    <property type="entry name" value="tRNA_edit"/>
    <property type="match status" value="1"/>
</dbReference>
<dbReference type="PIRSF" id="PIRSF001535">
    <property type="entry name" value="ProRS_1"/>
    <property type="match status" value="1"/>
</dbReference>
<dbReference type="PRINTS" id="PR01046">
    <property type="entry name" value="TRNASYNTHPRO"/>
</dbReference>
<dbReference type="SUPFAM" id="SSF52954">
    <property type="entry name" value="Class II aaRS ABD-related"/>
    <property type="match status" value="1"/>
</dbReference>
<dbReference type="SUPFAM" id="SSF55681">
    <property type="entry name" value="Class II aaRS and biotin synthetases"/>
    <property type="match status" value="1"/>
</dbReference>
<dbReference type="SUPFAM" id="SSF55826">
    <property type="entry name" value="YbaK/ProRS associated domain"/>
    <property type="match status" value="1"/>
</dbReference>
<dbReference type="PROSITE" id="PS50862">
    <property type="entry name" value="AA_TRNA_LIGASE_II"/>
    <property type="match status" value="1"/>
</dbReference>
<organism>
    <name type="scientific">Paraburkholderia xenovorans (strain LB400)</name>
    <dbReference type="NCBI Taxonomy" id="266265"/>
    <lineage>
        <taxon>Bacteria</taxon>
        <taxon>Pseudomonadati</taxon>
        <taxon>Pseudomonadota</taxon>
        <taxon>Betaproteobacteria</taxon>
        <taxon>Burkholderiales</taxon>
        <taxon>Burkholderiaceae</taxon>
        <taxon>Paraburkholderia</taxon>
    </lineage>
</organism>
<accession>Q13U19</accession>
<sequence length="578" mass="64045">MKASRFFIGTLKEAPADAEIVSHKLMVRAGMIRRVAGGIYNYLPIGLRSIRKVEAIVREEMNRAGAIELLMPAVQPAELWQESGRWEKYGPELLRFKDRKQSDFVIGPTHEEVVTDIARNQIKSYRQLPVNFYQVQTKFRDEIRPRFGVMRGREFIMKDAYSFDKDMDGLRESYRKMYDAYVRIFTRLGLDFRAVAADNGSIGGSGSHEFHVIAETGEDAIAYCPTSDFAANVEAAEALPLHAERAAPAEEMKKTATPGKAKCEAVAELLNIPLERTIKSIILATENEGAEPTIWLLMLRGDHDLNEIKASKLPGLADFRMATEAEIIETFGTPPGYLGPLNTKKPVKVVADRTVANMSDFVVGSNEVDYHTTGVNWGRDLPEPVVADIRNVKKGDPSPDGKGVIDICRGIEVGHVFQLGTKYSEAMNATCLDETGKPRPMEMGCYGIGVTRILGAAIEQNFDDRGIIWPESIAPFEVVLCPMGYDRSEAVREAADKLYATLLEAGIDVILDDRGERPGVMFADWELIGVPHRLVIGDRGLKDGKLEYQGRRDAEATLLPVEDAAQTVIAKVRAALAR</sequence>
<evidence type="ECO:0000255" key="1">
    <source>
        <dbReference type="HAMAP-Rule" id="MF_01569"/>
    </source>
</evidence>
<name>SYP_PARXL</name>
<comment type="function">
    <text evidence="1">Catalyzes the attachment of proline to tRNA(Pro) in a two-step reaction: proline is first activated by ATP to form Pro-AMP and then transferred to the acceptor end of tRNA(Pro). As ProRS can inadvertently accommodate and process non-cognate amino acids such as alanine and cysteine, to avoid such errors it has two additional distinct editing activities against alanine. One activity is designated as 'pretransfer' editing and involves the tRNA(Pro)-independent hydrolysis of activated Ala-AMP. The other activity is designated 'posttransfer' editing and involves deacylation of mischarged Ala-tRNA(Pro). The misacylated Cys-tRNA(Pro) is not edited by ProRS.</text>
</comment>
<comment type="catalytic activity">
    <reaction evidence="1">
        <text>tRNA(Pro) + L-proline + ATP = L-prolyl-tRNA(Pro) + AMP + diphosphate</text>
        <dbReference type="Rhea" id="RHEA:14305"/>
        <dbReference type="Rhea" id="RHEA-COMP:9700"/>
        <dbReference type="Rhea" id="RHEA-COMP:9702"/>
        <dbReference type="ChEBI" id="CHEBI:30616"/>
        <dbReference type="ChEBI" id="CHEBI:33019"/>
        <dbReference type="ChEBI" id="CHEBI:60039"/>
        <dbReference type="ChEBI" id="CHEBI:78442"/>
        <dbReference type="ChEBI" id="CHEBI:78532"/>
        <dbReference type="ChEBI" id="CHEBI:456215"/>
        <dbReference type="EC" id="6.1.1.15"/>
    </reaction>
</comment>
<comment type="subunit">
    <text evidence="1">Homodimer.</text>
</comment>
<comment type="subcellular location">
    <subcellularLocation>
        <location evidence="1">Cytoplasm</location>
    </subcellularLocation>
</comment>
<comment type="domain">
    <text evidence="1">Consists of three domains: the N-terminal catalytic domain, the editing domain and the C-terminal anticodon-binding domain.</text>
</comment>
<comment type="similarity">
    <text evidence="1">Belongs to the class-II aminoacyl-tRNA synthetase family. ProS type 1 subfamily.</text>
</comment>
<gene>
    <name evidence="1" type="primary">proS</name>
    <name type="ordered locus">Bxeno_A3882</name>
    <name type="ORF">Bxe_A0513</name>
</gene>
<proteinExistence type="inferred from homology"/>
<reference key="1">
    <citation type="journal article" date="2006" name="Proc. Natl. Acad. Sci. U.S.A.">
        <title>Burkholderia xenovorans LB400 harbors a multi-replicon, 9.73-Mbp genome shaped for versatility.</title>
        <authorList>
            <person name="Chain P.S.G."/>
            <person name="Denef V.J."/>
            <person name="Konstantinidis K.T."/>
            <person name="Vergez L.M."/>
            <person name="Agullo L."/>
            <person name="Reyes V.L."/>
            <person name="Hauser L."/>
            <person name="Cordova M."/>
            <person name="Gomez L."/>
            <person name="Gonzalez M."/>
            <person name="Land M."/>
            <person name="Lao V."/>
            <person name="Larimer F."/>
            <person name="LiPuma J.J."/>
            <person name="Mahenthiralingam E."/>
            <person name="Malfatti S.A."/>
            <person name="Marx C.J."/>
            <person name="Parnell J.J."/>
            <person name="Ramette A."/>
            <person name="Richardson P."/>
            <person name="Seeger M."/>
            <person name="Smith D."/>
            <person name="Spilker T."/>
            <person name="Sul W.J."/>
            <person name="Tsoi T.V."/>
            <person name="Ulrich L.E."/>
            <person name="Zhulin I.B."/>
            <person name="Tiedje J.M."/>
        </authorList>
    </citation>
    <scope>NUCLEOTIDE SEQUENCE [LARGE SCALE GENOMIC DNA]</scope>
    <source>
        <strain>LB400</strain>
    </source>
</reference>
<feature type="chain" id="PRO_0000288317" description="Proline--tRNA ligase">
    <location>
        <begin position="1"/>
        <end position="578"/>
    </location>
</feature>
<keyword id="KW-0030">Aminoacyl-tRNA synthetase</keyword>
<keyword id="KW-0067">ATP-binding</keyword>
<keyword id="KW-0963">Cytoplasm</keyword>
<keyword id="KW-0436">Ligase</keyword>
<keyword id="KW-0547">Nucleotide-binding</keyword>
<keyword id="KW-0648">Protein biosynthesis</keyword>
<keyword id="KW-1185">Reference proteome</keyword>
<protein>
    <recommendedName>
        <fullName evidence="1">Proline--tRNA ligase</fullName>
        <ecNumber evidence="1">6.1.1.15</ecNumber>
    </recommendedName>
    <alternativeName>
        <fullName evidence="1">Prolyl-tRNA synthetase</fullName>
        <shortName evidence="1">ProRS</shortName>
    </alternativeName>
</protein>